<dbReference type="EC" id="3.6.1.52" evidence="4"/>
<dbReference type="EC" id="3.6.1.61" evidence="4"/>
<dbReference type="EMBL" id="AK017075">
    <property type="protein sequence ID" value="BAB30582.1"/>
    <property type="molecule type" value="mRNA"/>
</dbReference>
<dbReference type="EMBL" id="AK048062">
    <property type="protein sequence ID" value="BAC33229.1"/>
    <property type="molecule type" value="mRNA"/>
</dbReference>
<dbReference type="EMBL" id="BC027209">
    <property type="protein sequence ID" value="AAH27209.1"/>
    <property type="molecule type" value="mRNA"/>
</dbReference>
<dbReference type="CCDS" id="CCDS24138.1"/>
<dbReference type="RefSeq" id="NP_081998.3">
    <property type="nucleotide sequence ID" value="NM_027722.4"/>
</dbReference>
<dbReference type="PDB" id="2DUK">
    <property type="method" value="X-ray"/>
    <property type="resolution" value="2.62 A"/>
    <property type="chains" value="A/B=8-145"/>
</dbReference>
<dbReference type="PDBsum" id="2DUK"/>
<dbReference type="SMR" id="Q8R2U6"/>
<dbReference type="BioGRID" id="214552">
    <property type="interactions" value="2"/>
</dbReference>
<dbReference type="FunCoup" id="Q8R2U6">
    <property type="interactions" value="2655"/>
</dbReference>
<dbReference type="STRING" id="10090.ENSMUSP00000020217"/>
<dbReference type="PhosphoSitePlus" id="Q8R2U6"/>
<dbReference type="PaxDb" id="10090-ENSMUSP00000020217"/>
<dbReference type="ProteomicsDB" id="289949"/>
<dbReference type="Pumba" id="Q8R2U6"/>
<dbReference type="DNASU" id="71207"/>
<dbReference type="Ensembl" id="ENSMUST00000020217.7">
    <property type="protein sequence ID" value="ENSMUSP00000020217.6"/>
    <property type="gene ID" value="ENSMUSG00000020029.7"/>
</dbReference>
<dbReference type="GeneID" id="71207"/>
<dbReference type="KEGG" id="mmu:71207"/>
<dbReference type="UCSC" id="uc007gwp.2">
    <property type="organism name" value="mouse"/>
</dbReference>
<dbReference type="AGR" id="MGI:1918457"/>
<dbReference type="CTD" id="11163"/>
<dbReference type="MGI" id="MGI:1918457">
    <property type="gene designation" value="Nudt4"/>
</dbReference>
<dbReference type="VEuPathDB" id="HostDB:ENSMUSG00000020029"/>
<dbReference type="eggNOG" id="KOG2839">
    <property type="taxonomic scope" value="Eukaryota"/>
</dbReference>
<dbReference type="GeneTree" id="ENSGT00940000155210"/>
<dbReference type="HOGENOM" id="CLU_037162_1_0_1"/>
<dbReference type="InParanoid" id="Q8R2U6"/>
<dbReference type="OMA" id="NTCNPTC"/>
<dbReference type="OrthoDB" id="2011998at2759"/>
<dbReference type="PhylomeDB" id="Q8R2U6"/>
<dbReference type="TreeFam" id="TF106349"/>
<dbReference type="Reactome" id="R-MMU-1855167">
    <property type="pathway name" value="Synthesis of pyrophosphates in the cytosol"/>
</dbReference>
<dbReference type="BioGRID-ORCS" id="71207">
    <property type="hits" value="7 hits in 79 CRISPR screens"/>
</dbReference>
<dbReference type="ChiTaRS" id="Nudt4">
    <property type="organism name" value="mouse"/>
</dbReference>
<dbReference type="EvolutionaryTrace" id="Q8R2U6"/>
<dbReference type="PRO" id="PR:Q8R2U6"/>
<dbReference type="Proteomes" id="UP000000589">
    <property type="component" value="Chromosome 10"/>
</dbReference>
<dbReference type="RNAct" id="Q8R2U6">
    <property type="molecule type" value="protein"/>
</dbReference>
<dbReference type="Bgee" id="ENSMUSG00000020029">
    <property type="expression patterns" value="Expressed in molar tooth and 260 other cell types or tissues"/>
</dbReference>
<dbReference type="ExpressionAtlas" id="Q8R2U6">
    <property type="expression patterns" value="baseline and differential"/>
</dbReference>
<dbReference type="GO" id="GO:0005737">
    <property type="term" value="C:cytoplasm"/>
    <property type="evidence" value="ECO:0007669"/>
    <property type="project" value="UniProtKB-SubCell"/>
</dbReference>
<dbReference type="GO" id="GO:0008486">
    <property type="term" value="F:diphosphoinositol-polyphosphate diphosphatase activity"/>
    <property type="evidence" value="ECO:0000250"/>
    <property type="project" value="UniProtKB"/>
</dbReference>
<dbReference type="GO" id="GO:0052848">
    <property type="term" value="F:inositol-3,5-bisdiphosphate-2,3,4,6-tetrakisphosphate 5-diphosphatase activity"/>
    <property type="evidence" value="ECO:0007669"/>
    <property type="project" value="RHEA"/>
</dbReference>
<dbReference type="GO" id="GO:0052845">
    <property type="term" value="F:inositol-5-diphosphate-1,2,3,4,6-pentakisphosphate diphosphatase activity"/>
    <property type="evidence" value="ECO:0007669"/>
    <property type="project" value="RHEA"/>
</dbReference>
<dbReference type="GO" id="GO:0106211">
    <property type="term" value="F:inositol-5-diphosphate-1,3,4,6-tetrakisphosphate diphosphatase activity"/>
    <property type="evidence" value="ECO:0007669"/>
    <property type="project" value="RHEA"/>
</dbReference>
<dbReference type="GO" id="GO:0046872">
    <property type="term" value="F:metal ion binding"/>
    <property type="evidence" value="ECO:0007669"/>
    <property type="project" value="UniProtKB-KW"/>
</dbReference>
<dbReference type="GO" id="GO:0030515">
    <property type="term" value="F:snoRNA binding"/>
    <property type="evidence" value="ECO:0000314"/>
    <property type="project" value="UniProtKB"/>
</dbReference>
<dbReference type="CDD" id="cd04666">
    <property type="entry name" value="NUDIX_DIPP2_like_Nudt4"/>
    <property type="match status" value="1"/>
</dbReference>
<dbReference type="FunFam" id="3.90.79.10:FF:000002">
    <property type="entry name" value="diphosphoinositol polyphosphate phosphohydrolase 1"/>
    <property type="match status" value="1"/>
</dbReference>
<dbReference type="Gene3D" id="3.90.79.10">
    <property type="entry name" value="Nucleoside Triphosphate Pyrophosphohydrolase"/>
    <property type="match status" value="1"/>
</dbReference>
<dbReference type="InterPro" id="IPR047198">
    <property type="entry name" value="DDP-like_NUDIX"/>
</dbReference>
<dbReference type="InterPro" id="IPR015797">
    <property type="entry name" value="NUDIX_hydrolase-like_dom_sf"/>
</dbReference>
<dbReference type="InterPro" id="IPR020084">
    <property type="entry name" value="NUDIX_hydrolase_CS"/>
</dbReference>
<dbReference type="InterPro" id="IPR000086">
    <property type="entry name" value="NUDIX_hydrolase_dom"/>
</dbReference>
<dbReference type="PANTHER" id="PTHR12629">
    <property type="entry name" value="DIPHOSPHOINOSITOL POLYPHOSPHATE PHOSPHOHYDROLASE"/>
    <property type="match status" value="1"/>
</dbReference>
<dbReference type="PANTHER" id="PTHR12629:SF6">
    <property type="entry name" value="DIPHOSPHOINOSITOL POLYPHOSPHATE PHOSPHOHYDROLASE 2-RELATED"/>
    <property type="match status" value="1"/>
</dbReference>
<dbReference type="Pfam" id="PF00293">
    <property type="entry name" value="NUDIX"/>
    <property type="match status" value="1"/>
</dbReference>
<dbReference type="SUPFAM" id="SSF55811">
    <property type="entry name" value="Nudix"/>
    <property type="match status" value="1"/>
</dbReference>
<dbReference type="PROSITE" id="PS51462">
    <property type="entry name" value="NUDIX"/>
    <property type="match status" value="1"/>
</dbReference>
<dbReference type="PROSITE" id="PS00893">
    <property type="entry name" value="NUDIX_BOX"/>
    <property type="match status" value="1"/>
</dbReference>
<accession>Q8R2U6</accession>
<accession>Q8BXB9</accession>
<accession>Q9D3T6</accession>
<gene>
    <name evidence="8" type="primary">Nudt4</name>
    <name type="synonym">Dipp2</name>
</gene>
<proteinExistence type="evidence at protein level"/>
<organism>
    <name type="scientific">Mus musculus</name>
    <name type="common">Mouse</name>
    <dbReference type="NCBI Taxonomy" id="10090"/>
    <lineage>
        <taxon>Eukaryota</taxon>
        <taxon>Metazoa</taxon>
        <taxon>Chordata</taxon>
        <taxon>Craniata</taxon>
        <taxon>Vertebrata</taxon>
        <taxon>Euteleostomi</taxon>
        <taxon>Mammalia</taxon>
        <taxon>Eutheria</taxon>
        <taxon>Euarchontoglires</taxon>
        <taxon>Glires</taxon>
        <taxon>Rodentia</taxon>
        <taxon>Myomorpha</taxon>
        <taxon>Muroidea</taxon>
        <taxon>Muridae</taxon>
        <taxon>Murinae</taxon>
        <taxon>Mus</taxon>
        <taxon>Mus</taxon>
    </lineage>
</organism>
<reference key="1">
    <citation type="journal article" date="2005" name="Science">
        <title>The transcriptional landscape of the mammalian genome.</title>
        <authorList>
            <person name="Carninci P."/>
            <person name="Kasukawa T."/>
            <person name="Katayama S."/>
            <person name="Gough J."/>
            <person name="Frith M.C."/>
            <person name="Maeda N."/>
            <person name="Oyama R."/>
            <person name="Ravasi T."/>
            <person name="Lenhard B."/>
            <person name="Wells C."/>
            <person name="Kodzius R."/>
            <person name="Shimokawa K."/>
            <person name="Bajic V.B."/>
            <person name="Brenner S.E."/>
            <person name="Batalov S."/>
            <person name="Forrest A.R."/>
            <person name="Zavolan M."/>
            <person name="Davis M.J."/>
            <person name="Wilming L.G."/>
            <person name="Aidinis V."/>
            <person name="Allen J.E."/>
            <person name="Ambesi-Impiombato A."/>
            <person name="Apweiler R."/>
            <person name="Aturaliya R.N."/>
            <person name="Bailey T.L."/>
            <person name="Bansal M."/>
            <person name="Baxter L."/>
            <person name="Beisel K.W."/>
            <person name="Bersano T."/>
            <person name="Bono H."/>
            <person name="Chalk A.M."/>
            <person name="Chiu K.P."/>
            <person name="Choudhary V."/>
            <person name="Christoffels A."/>
            <person name="Clutterbuck D.R."/>
            <person name="Crowe M.L."/>
            <person name="Dalla E."/>
            <person name="Dalrymple B.P."/>
            <person name="de Bono B."/>
            <person name="Della Gatta G."/>
            <person name="di Bernardo D."/>
            <person name="Down T."/>
            <person name="Engstrom P."/>
            <person name="Fagiolini M."/>
            <person name="Faulkner G."/>
            <person name="Fletcher C.F."/>
            <person name="Fukushima T."/>
            <person name="Furuno M."/>
            <person name="Futaki S."/>
            <person name="Gariboldi M."/>
            <person name="Georgii-Hemming P."/>
            <person name="Gingeras T.R."/>
            <person name="Gojobori T."/>
            <person name="Green R.E."/>
            <person name="Gustincich S."/>
            <person name="Harbers M."/>
            <person name="Hayashi Y."/>
            <person name="Hensch T.K."/>
            <person name="Hirokawa N."/>
            <person name="Hill D."/>
            <person name="Huminiecki L."/>
            <person name="Iacono M."/>
            <person name="Ikeo K."/>
            <person name="Iwama A."/>
            <person name="Ishikawa T."/>
            <person name="Jakt M."/>
            <person name="Kanapin A."/>
            <person name="Katoh M."/>
            <person name="Kawasawa Y."/>
            <person name="Kelso J."/>
            <person name="Kitamura H."/>
            <person name="Kitano H."/>
            <person name="Kollias G."/>
            <person name="Krishnan S.P."/>
            <person name="Kruger A."/>
            <person name="Kummerfeld S.K."/>
            <person name="Kurochkin I.V."/>
            <person name="Lareau L.F."/>
            <person name="Lazarevic D."/>
            <person name="Lipovich L."/>
            <person name="Liu J."/>
            <person name="Liuni S."/>
            <person name="McWilliam S."/>
            <person name="Madan Babu M."/>
            <person name="Madera M."/>
            <person name="Marchionni L."/>
            <person name="Matsuda H."/>
            <person name="Matsuzawa S."/>
            <person name="Miki H."/>
            <person name="Mignone F."/>
            <person name="Miyake S."/>
            <person name="Morris K."/>
            <person name="Mottagui-Tabar S."/>
            <person name="Mulder N."/>
            <person name="Nakano N."/>
            <person name="Nakauchi H."/>
            <person name="Ng P."/>
            <person name="Nilsson R."/>
            <person name="Nishiguchi S."/>
            <person name="Nishikawa S."/>
            <person name="Nori F."/>
            <person name="Ohara O."/>
            <person name="Okazaki Y."/>
            <person name="Orlando V."/>
            <person name="Pang K.C."/>
            <person name="Pavan W.J."/>
            <person name="Pavesi G."/>
            <person name="Pesole G."/>
            <person name="Petrovsky N."/>
            <person name="Piazza S."/>
            <person name="Reed J."/>
            <person name="Reid J.F."/>
            <person name="Ring B.Z."/>
            <person name="Ringwald M."/>
            <person name="Rost B."/>
            <person name="Ruan Y."/>
            <person name="Salzberg S.L."/>
            <person name="Sandelin A."/>
            <person name="Schneider C."/>
            <person name="Schoenbach C."/>
            <person name="Sekiguchi K."/>
            <person name="Semple C.A."/>
            <person name="Seno S."/>
            <person name="Sessa L."/>
            <person name="Sheng Y."/>
            <person name="Shibata Y."/>
            <person name="Shimada H."/>
            <person name="Shimada K."/>
            <person name="Silva D."/>
            <person name="Sinclair B."/>
            <person name="Sperling S."/>
            <person name="Stupka E."/>
            <person name="Sugiura K."/>
            <person name="Sultana R."/>
            <person name="Takenaka Y."/>
            <person name="Taki K."/>
            <person name="Tammoja K."/>
            <person name="Tan S.L."/>
            <person name="Tang S."/>
            <person name="Taylor M.S."/>
            <person name="Tegner J."/>
            <person name="Teichmann S.A."/>
            <person name="Ueda H.R."/>
            <person name="van Nimwegen E."/>
            <person name="Verardo R."/>
            <person name="Wei C.L."/>
            <person name="Yagi K."/>
            <person name="Yamanishi H."/>
            <person name="Zabarovsky E."/>
            <person name="Zhu S."/>
            <person name="Zimmer A."/>
            <person name="Hide W."/>
            <person name="Bult C."/>
            <person name="Grimmond S.M."/>
            <person name="Teasdale R.D."/>
            <person name="Liu E.T."/>
            <person name="Brusic V."/>
            <person name="Quackenbush J."/>
            <person name="Wahlestedt C."/>
            <person name="Mattick J.S."/>
            <person name="Hume D.A."/>
            <person name="Kai C."/>
            <person name="Sasaki D."/>
            <person name="Tomaru Y."/>
            <person name="Fukuda S."/>
            <person name="Kanamori-Katayama M."/>
            <person name="Suzuki M."/>
            <person name="Aoki J."/>
            <person name="Arakawa T."/>
            <person name="Iida J."/>
            <person name="Imamura K."/>
            <person name="Itoh M."/>
            <person name="Kato T."/>
            <person name="Kawaji H."/>
            <person name="Kawagashira N."/>
            <person name="Kawashima T."/>
            <person name="Kojima M."/>
            <person name="Kondo S."/>
            <person name="Konno H."/>
            <person name="Nakano K."/>
            <person name="Ninomiya N."/>
            <person name="Nishio T."/>
            <person name="Okada M."/>
            <person name="Plessy C."/>
            <person name="Shibata K."/>
            <person name="Shiraki T."/>
            <person name="Suzuki S."/>
            <person name="Tagami M."/>
            <person name="Waki K."/>
            <person name="Watahiki A."/>
            <person name="Okamura-Oho Y."/>
            <person name="Suzuki H."/>
            <person name="Kawai J."/>
            <person name="Hayashizaki Y."/>
        </authorList>
    </citation>
    <scope>NUCLEOTIDE SEQUENCE [LARGE SCALE MRNA]</scope>
    <source>
        <strain>C57BL/6J</strain>
        <tissue>Head</tissue>
        <tissue>Testis</tissue>
    </source>
</reference>
<reference key="2">
    <citation type="journal article" date="2004" name="Genome Res.">
        <title>The status, quality, and expansion of the NIH full-length cDNA project: the Mammalian Gene Collection (MGC).</title>
        <authorList>
            <consortium name="The MGC Project Team"/>
        </authorList>
    </citation>
    <scope>NUCLEOTIDE SEQUENCE [LARGE SCALE MRNA]</scope>
    <source>
        <strain>Czech II</strain>
        <tissue>Mammary tumor</tissue>
    </source>
</reference>
<reference key="3">
    <citation type="journal article" date="2010" name="Cell">
        <title>A tissue-specific atlas of mouse protein phosphorylation and expression.</title>
        <authorList>
            <person name="Huttlin E.L."/>
            <person name="Jedrychowski M.P."/>
            <person name="Elias J.E."/>
            <person name="Goswami T."/>
            <person name="Rad R."/>
            <person name="Beausoleil S.A."/>
            <person name="Villen J."/>
            <person name="Haas W."/>
            <person name="Sowa M.E."/>
            <person name="Gygi S.P."/>
        </authorList>
    </citation>
    <scope>IDENTIFICATION BY MASS SPECTROMETRY [LARGE SCALE ANALYSIS]</scope>
    <source>
        <tissue>Brain</tissue>
        <tissue>Heart</tissue>
        <tissue>Kidney</tissue>
        <tissue>Liver</tissue>
        <tissue>Spleen</tissue>
    </source>
</reference>
<reference key="4">
    <citation type="journal article" date="2010" name="Mol. Cell">
        <title>Multiple mRNA decapping enzymes in mammalian cells.</title>
        <authorList>
            <person name="Song M.G."/>
            <person name="Li Y."/>
            <person name="Kiledjian M."/>
        </authorList>
    </citation>
    <scope>ABSENCE OF FUNCTION AS A DECAPPING ENZYME</scope>
    <scope>RNA-BINDING</scope>
</reference>
<reference key="5">
    <citation type="submission" date="2007-01" db="PDB data bank">
        <title>Crystal structure of MS0616.</title>
        <authorList>
            <consortium name="RIKEN structural genomics initiative (RSGI)"/>
        </authorList>
    </citation>
    <scope>X-RAY CRYSTALLOGRAPHY (2.62 ANGSTROMS) OF 8-145</scope>
</reference>
<protein>
    <recommendedName>
        <fullName evidence="4">Diphosphoinositol polyphosphate phosphohydrolase 2</fullName>
        <shortName evidence="4">DIPP-2</shortName>
        <ecNumber evidence="4">3.6.1.52</ecNumber>
    </recommendedName>
    <alternativeName>
        <fullName>Diadenosine 5',5'''-P1,P6-hexaphosphate hydrolase 2</fullName>
        <ecNumber evidence="4">3.6.1.61</ecNumber>
    </alternativeName>
    <alternativeName>
        <fullName>Nucleoside diphosphate-linked moiety X motif 4</fullName>
        <shortName>Nudix motif 4</shortName>
    </alternativeName>
</protein>
<feature type="chain" id="PRO_0000057059" description="Diphosphoinositol polyphosphate phosphohydrolase 2">
    <location>
        <begin position="1"/>
        <end position="179"/>
    </location>
</feature>
<feature type="domain" description="Nudix hydrolase" evidence="5">
    <location>
        <begin position="17"/>
        <end position="143"/>
    </location>
</feature>
<feature type="short sequence motif" description="Nudix box">
    <location>
        <begin position="50"/>
        <end position="71"/>
    </location>
</feature>
<feature type="active site" description="Proton acceptor" evidence="1">
    <location>
        <position position="68"/>
    </location>
</feature>
<feature type="binding site" evidence="2">
    <location>
        <position position="9"/>
    </location>
    <ligand>
        <name>substrate</name>
    </ligand>
</feature>
<feature type="binding site" evidence="2">
    <location>
        <begin position="17"/>
        <end position="19"/>
    </location>
    <ligand>
        <name>substrate</name>
    </ligand>
</feature>
<feature type="binding site" evidence="2">
    <location>
        <begin position="38"/>
        <end position="40"/>
    </location>
    <ligand>
        <name>substrate</name>
    </ligand>
</feature>
<feature type="binding site" evidence="2">
    <location>
        <position position="49"/>
    </location>
    <ligand>
        <name>Mg(2+)</name>
        <dbReference type="ChEBI" id="CHEBI:18420"/>
        <label>1</label>
    </ligand>
</feature>
<feature type="binding site" evidence="2">
    <location>
        <position position="65"/>
    </location>
    <ligand>
        <name>Mg(2+)</name>
        <dbReference type="ChEBI" id="CHEBI:18420"/>
        <label>2</label>
    </ligand>
</feature>
<feature type="binding site" evidence="2">
    <location>
        <position position="65"/>
    </location>
    <ligand>
        <name>Mg(2+)</name>
        <dbReference type="ChEBI" id="CHEBI:18420"/>
        <label>3</label>
    </ligand>
</feature>
<feature type="binding site" evidence="2">
    <location>
        <position position="69"/>
    </location>
    <ligand>
        <name>Mg(2+)</name>
        <dbReference type="ChEBI" id="CHEBI:18420"/>
        <label>1</label>
    </ligand>
</feature>
<feature type="binding site" evidence="2">
    <location>
        <begin position="88"/>
        <end position="90"/>
    </location>
    <ligand>
        <name>substrate</name>
    </ligand>
</feature>
<feature type="binding site" evidence="2">
    <location>
        <position position="114"/>
    </location>
    <ligand>
        <name>substrate</name>
    </ligand>
</feature>
<feature type="binding site" evidence="2">
    <location>
        <position position="132"/>
    </location>
    <ligand>
        <name>substrate</name>
    </ligand>
</feature>
<feature type="sequence conflict" description="In Ref. 1; BAC33229." evidence="7" ref="1">
    <original>E</original>
    <variation>Q</variation>
    <location>
        <position position="69"/>
    </location>
</feature>
<feature type="sequence conflict" description="In Ref. 1; BAB30582." evidence="7" ref="1">
    <original>A</original>
    <variation>C</variation>
    <location>
        <position position="168"/>
    </location>
</feature>
<feature type="strand" evidence="9">
    <location>
        <begin position="17"/>
        <end position="27"/>
    </location>
</feature>
<feature type="strand" evidence="9">
    <location>
        <begin position="32"/>
        <end position="37"/>
    </location>
</feature>
<feature type="strand" evidence="9">
    <location>
        <begin position="44"/>
        <end position="46"/>
    </location>
</feature>
<feature type="strand" evidence="9">
    <location>
        <begin position="49"/>
        <end position="51"/>
    </location>
</feature>
<feature type="helix" evidence="9">
    <location>
        <begin position="58"/>
        <end position="69"/>
    </location>
</feature>
<feature type="strand" evidence="9">
    <location>
        <begin position="72"/>
        <end position="85"/>
    </location>
</feature>
<feature type="turn" evidence="9">
    <location>
        <begin position="86"/>
        <end position="89"/>
    </location>
</feature>
<feature type="strand" evidence="9">
    <location>
        <begin position="90"/>
        <end position="102"/>
    </location>
</feature>
<feature type="helix" evidence="9">
    <location>
        <begin position="109"/>
        <end position="112"/>
    </location>
</feature>
<feature type="strand" evidence="9">
    <location>
        <begin position="116"/>
        <end position="120"/>
    </location>
</feature>
<feature type="helix" evidence="9">
    <location>
        <begin position="121"/>
        <end position="129"/>
    </location>
</feature>
<feature type="helix" evidence="9">
    <location>
        <begin position="133"/>
        <end position="139"/>
    </location>
</feature>
<feature type="turn" evidence="9">
    <location>
        <begin position="140"/>
        <end position="142"/>
    </location>
</feature>
<keyword id="KW-0002">3D-structure</keyword>
<keyword id="KW-0963">Cytoplasm</keyword>
<keyword id="KW-0378">Hydrolase</keyword>
<keyword id="KW-0460">Magnesium</keyword>
<keyword id="KW-0464">Manganese</keyword>
<keyword id="KW-0479">Metal-binding</keyword>
<keyword id="KW-1185">Reference proteome</keyword>
<keyword id="KW-0694">RNA-binding</keyword>
<comment type="function">
    <text evidence="4 6">Cleaves the beta-phosphate from diphosphoinositol polyphosphates such as PP-InsP5 (diphosphoinositol pentakisphosphate), PP-InsP4 (diphosphoinositol tetrakisphosphate) and [PP]2-InsP4 (bisdiphosphoinositol tetrakisphosphate), suggesting that it may play a role in signal transduction. Diadenosine polyphosphates, particularly Ap6A (P(1),P(6)-bis(5a-adenosyl) hexaphosphate) and Ap5A (P(1),P(5)-bis(5'-adenosyl) pentaphosphate) are downstream effectors of a signaling cascade that regulates cardiac KATP channels, can also be substrates, although with lower preference than the diphosphoinositol polyphosphates. Can also catalyze the hydrolysis of 5-phosphoribose 1-diphosphate, generating the glycolytic activator ribose 1,5-bisphosphate (By similarity). Does not play a role in U8 snoRNA decapping activity (PubMed:16141072). Binds U8 snoRNA (PubMed:16141072).</text>
</comment>
<comment type="catalytic activity">
    <reaction evidence="4">
        <text>diphospho-myo-inositol polyphosphate + H2O = myo-inositol polyphosphate + phosphate.</text>
        <dbReference type="EC" id="3.6.1.52"/>
    </reaction>
</comment>
<comment type="catalytic activity">
    <reaction evidence="4">
        <text>5-diphospho-1D-myo-inositol 1,2,3,4,6-pentakisphosphate + H2O = 1D-myo-inositol hexakisphosphate + phosphate + H(+)</text>
        <dbReference type="Rhea" id="RHEA:22384"/>
        <dbReference type="ChEBI" id="CHEBI:15377"/>
        <dbReference type="ChEBI" id="CHEBI:15378"/>
        <dbReference type="ChEBI" id="CHEBI:43474"/>
        <dbReference type="ChEBI" id="CHEBI:58130"/>
        <dbReference type="ChEBI" id="CHEBI:58628"/>
        <dbReference type="EC" id="3.6.1.52"/>
    </reaction>
    <physiologicalReaction direction="left-to-right" evidence="4">
        <dbReference type="Rhea" id="RHEA:22385"/>
    </physiologicalReaction>
</comment>
<comment type="catalytic activity">
    <reaction evidence="4">
        <text>3,5-bis(diphospho)-1D-myo-inositol 1,2,4,6-tetrakisphosphate + H2O = 3-diphospho-1D-myo-inositol 1,2,4,5,6-pentakisphosphate + phosphate + 2 H(+)</text>
        <dbReference type="Rhea" id="RHEA:56312"/>
        <dbReference type="ChEBI" id="CHEBI:15377"/>
        <dbReference type="ChEBI" id="CHEBI:15378"/>
        <dbReference type="ChEBI" id="CHEBI:43474"/>
        <dbReference type="ChEBI" id="CHEBI:140372"/>
        <dbReference type="ChEBI" id="CHEBI:140374"/>
        <dbReference type="EC" id="3.6.1.52"/>
    </reaction>
    <physiologicalReaction direction="left-to-right" evidence="4">
        <dbReference type="Rhea" id="RHEA:56313"/>
    </physiologicalReaction>
</comment>
<comment type="catalytic activity">
    <reaction evidence="4">
        <text>5-diphospho-1D-myo-inositol 1,3,4,6-tetrakisphosphate + H2O = 1D-myo-inositol 1,3,4,5,6-pentakisphosphate + phosphate + H(+)</text>
        <dbReference type="Rhea" id="RHEA:59500"/>
        <dbReference type="ChEBI" id="CHEBI:15377"/>
        <dbReference type="ChEBI" id="CHEBI:15378"/>
        <dbReference type="ChEBI" id="CHEBI:43474"/>
        <dbReference type="ChEBI" id="CHEBI:57733"/>
        <dbReference type="ChEBI" id="CHEBI:142939"/>
        <dbReference type="EC" id="3.6.1.52"/>
    </reaction>
    <physiologicalReaction direction="left-to-right" evidence="4">
        <dbReference type="Rhea" id="RHEA:59501"/>
    </physiologicalReaction>
</comment>
<comment type="catalytic activity">
    <reaction evidence="4">
        <text>P(1),P(6)-bis(5'-adenosyl) hexaphosphate + H2O = 2 ATP + 2 H(+)</text>
        <dbReference type="Rhea" id="RHEA:32043"/>
        <dbReference type="ChEBI" id="CHEBI:15377"/>
        <dbReference type="ChEBI" id="CHEBI:15378"/>
        <dbReference type="ChEBI" id="CHEBI:30616"/>
        <dbReference type="ChEBI" id="CHEBI:63740"/>
        <dbReference type="EC" id="3.6.1.61"/>
    </reaction>
    <physiologicalReaction direction="left-to-right" evidence="4">
        <dbReference type="Rhea" id="RHEA:32044"/>
    </physiologicalReaction>
</comment>
<comment type="catalytic activity">
    <reaction evidence="4">
        <text>P(1),P(5)-bis(5'-adenosyl) pentaphosphate + H2O = ADP + ATP + 2 H(+)</text>
        <dbReference type="Rhea" id="RHEA:30527"/>
        <dbReference type="ChEBI" id="CHEBI:15377"/>
        <dbReference type="ChEBI" id="CHEBI:15378"/>
        <dbReference type="ChEBI" id="CHEBI:30616"/>
        <dbReference type="ChEBI" id="CHEBI:62041"/>
        <dbReference type="ChEBI" id="CHEBI:456216"/>
        <dbReference type="EC" id="3.6.1.61"/>
    </reaction>
    <physiologicalReaction direction="left-to-right" evidence="4">
        <dbReference type="Rhea" id="RHEA:30528"/>
    </physiologicalReaction>
</comment>
<comment type="catalytic activity">
    <reaction evidence="4">
        <text>5-phospho-alpha-D-ribose 1-diphosphate + H2O = alpha-D-ribose 1,5-bisphosphate + phosphate + H(+)</text>
        <dbReference type="Rhea" id="RHEA:80811"/>
        <dbReference type="ChEBI" id="CHEBI:15377"/>
        <dbReference type="ChEBI" id="CHEBI:15378"/>
        <dbReference type="ChEBI" id="CHEBI:43474"/>
        <dbReference type="ChEBI" id="CHEBI:58017"/>
        <dbReference type="ChEBI" id="CHEBI:68688"/>
    </reaction>
    <physiologicalReaction direction="left-to-right" evidence="4">
        <dbReference type="Rhea" id="RHEA:80812"/>
    </physiologicalReaction>
</comment>
<comment type="cofactor">
    <cofactor evidence="3">
        <name>Mg(2+)</name>
        <dbReference type="ChEBI" id="CHEBI:18420"/>
    </cofactor>
    <cofactor evidence="3">
        <name>Mn(2+)</name>
        <dbReference type="ChEBI" id="CHEBI:29035"/>
    </cofactor>
    <text evidence="3">Binds 3 Mg(2+) or Mn(2+) ions per subunit.</text>
</comment>
<comment type="subcellular location">
    <subcellularLocation>
        <location evidence="4">Cytoplasm</location>
    </subcellularLocation>
</comment>
<comment type="similarity">
    <text evidence="7">Belongs to the Nudix hydrolase family. DIPP subfamily.</text>
</comment>
<sequence length="179" mass="20156">MKFKPNQTRTYDREGFKKRAACLCFRSEQEDEVLLVSSSRYPDQWIVPGGGMEPEEEPGGAAVREVYEEAGVKGKLGRLLGIFENQDRKHRTYVYVLTVTEILEDWEDSVNIGRKREWFKVEDAIKVLQCHKPVHAEYLEKLKLGCSPTNGNSSVPSLPDNNALFVTAAPPSGVPSSIR</sequence>
<evidence type="ECO:0000250" key="1"/>
<evidence type="ECO:0000250" key="2">
    <source>
        <dbReference type="UniProtKB" id="O95989"/>
    </source>
</evidence>
<evidence type="ECO:0000250" key="3">
    <source>
        <dbReference type="UniProtKB" id="Q96G61"/>
    </source>
</evidence>
<evidence type="ECO:0000250" key="4">
    <source>
        <dbReference type="UniProtKB" id="Q9NZJ9"/>
    </source>
</evidence>
<evidence type="ECO:0000255" key="5">
    <source>
        <dbReference type="PROSITE-ProRule" id="PRU00794"/>
    </source>
</evidence>
<evidence type="ECO:0000269" key="6">
    <source>
    </source>
</evidence>
<evidence type="ECO:0000305" key="7"/>
<evidence type="ECO:0000312" key="8">
    <source>
        <dbReference type="MGI" id="MGI:1918457"/>
    </source>
</evidence>
<evidence type="ECO:0007829" key="9">
    <source>
        <dbReference type="PDB" id="2DUK"/>
    </source>
</evidence>
<name>NUDT4_MOUSE</name>